<protein>
    <recommendedName>
        <fullName evidence="1">2-succinylbenzoate--CoA ligase</fullName>
        <ecNumber evidence="1">6.2.1.26</ecNumber>
    </recommendedName>
    <alternativeName>
        <fullName evidence="1">o-succinylbenzoyl-CoA synthetase</fullName>
        <shortName evidence="1">OSB-CoA synthetase</shortName>
    </alternativeName>
</protein>
<sequence>MDFWLYKQAQQNGHHIAITDGQESYTYQNLYCEASLLAKRLKAYQQSRVGLYIDNSIQSIILIHACWLANIEIAMINTRLTPNEMTNQMRSIDVQLIFCTLPLELRGFQIVSLDDIEFAGTDITTNGLLDNTMGIQYDTSNETVVPKDSPSNILNTSFNLDDIASIMFTSGTTGPQKAVPQTFRNHYASAIGCKESLGFDRDTNWLSVLPIYHISGLSVLLRAVIEGFTVRIVDKFNAEQILTMIKNERITHISLVPQTLNWLMQQGLHEPYDLQKILLGGAKLSASMIETALQYNLPIYNSFGMTETCSQFLTATPEMLHARPDTVGMPSANVDVKIKNPNKKGHGELMIKGANVMNGYLYPTDLTGTFENGYFNTGDIAEIDHEGYVMIYDRRKDLIISGGENIYPYQIETVAKQFPGIIDAVCVGHPDDTWGQVPKLYFVSESNISKAQLIAYLSQHLAKYKVPKHFEKVDTLPYTSTGKLQRNKLYRG</sequence>
<evidence type="ECO:0000255" key="1">
    <source>
        <dbReference type="HAMAP-Rule" id="MF_00731"/>
    </source>
</evidence>
<comment type="function">
    <text evidence="1">Converts 2-succinylbenzoate (OSB) to 2-succinylbenzoyl-CoA (OSB-CoA).</text>
</comment>
<comment type="catalytic activity">
    <reaction evidence="1">
        <text>2-succinylbenzoate + ATP + CoA = 2-succinylbenzoyl-CoA + AMP + diphosphate</text>
        <dbReference type="Rhea" id="RHEA:17009"/>
        <dbReference type="ChEBI" id="CHEBI:18325"/>
        <dbReference type="ChEBI" id="CHEBI:30616"/>
        <dbReference type="ChEBI" id="CHEBI:33019"/>
        <dbReference type="ChEBI" id="CHEBI:57287"/>
        <dbReference type="ChEBI" id="CHEBI:57364"/>
        <dbReference type="ChEBI" id="CHEBI:456215"/>
        <dbReference type="EC" id="6.2.1.26"/>
    </reaction>
</comment>
<comment type="pathway">
    <text evidence="1">Quinol/quinone metabolism; 1,4-dihydroxy-2-naphthoate biosynthesis; 1,4-dihydroxy-2-naphthoate from chorismate: step 5/7.</text>
</comment>
<comment type="pathway">
    <text evidence="1">Quinol/quinone metabolism; menaquinone biosynthesis.</text>
</comment>
<comment type="similarity">
    <text evidence="1">Belongs to the ATP-dependent AMP-binding enzyme family. MenE subfamily.</text>
</comment>
<name>MENE_STAAR</name>
<accession>Q6GFR0</accession>
<keyword id="KW-0067">ATP-binding</keyword>
<keyword id="KW-0436">Ligase</keyword>
<keyword id="KW-0474">Menaquinone biosynthesis</keyword>
<keyword id="KW-0547">Nucleotide-binding</keyword>
<reference key="1">
    <citation type="journal article" date="2004" name="Proc. Natl. Acad. Sci. U.S.A.">
        <title>Complete genomes of two clinical Staphylococcus aureus strains: evidence for the rapid evolution of virulence and drug resistance.</title>
        <authorList>
            <person name="Holden M.T.G."/>
            <person name="Feil E.J."/>
            <person name="Lindsay J.A."/>
            <person name="Peacock S.J."/>
            <person name="Day N.P.J."/>
            <person name="Enright M.C."/>
            <person name="Foster T.J."/>
            <person name="Moore C.E."/>
            <person name="Hurst L."/>
            <person name="Atkin R."/>
            <person name="Barron A."/>
            <person name="Bason N."/>
            <person name="Bentley S.D."/>
            <person name="Chillingworth C."/>
            <person name="Chillingworth T."/>
            <person name="Churcher C."/>
            <person name="Clark L."/>
            <person name="Corton C."/>
            <person name="Cronin A."/>
            <person name="Doggett J."/>
            <person name="Dowd L."/>
            <person name="Feltwell T."/>
            <person name="Hance Z."/>
            <person name="Harris B."/>
            <person name="Hauser H."/>
            <person name="Holroyd S."/>
            <person name="Jagels K."/>
            <person name="James K.D."/>
            <person name="Lennard N."/>
            <person name="Line A."/>
            <person name="Mayes R."/>
            <person name="Moule S."/>
            <person name="Mungall K."/>
            <person name="Ormond D."/>
            <person name="Quail M.A."/>
            <person name="Rabbinowitsch E."/>
            <person name="Rutherford K.M."/>
            <person name="Sanders M."/>
            <person name="Sharp S."/>
            <person name="Simmonds M."/>
            <person name="Stevens K."/>
            <person name="Whitehead S."/>
            <person name="Barrell B.G."/>
            <person name="Spratt B.G."/>
            <person name="Parkhill J."/>
        </authorList>
    </citation>
    <scope>NUCLEOTIDE SEQUENCE [LARGE SCALE GENOMIC DNA]</scope>
    <source>
        <strain>MRSA252</strain>
    </source>
</reference>
<gene>
    <name evidence="1" type="primary">menE</name>
    <name type="ordered locus">SAR1877</name>
</gene>
<feature type="chain" id="PRO_0000193169" description="2-succinylbenzoate--CoA ligase">
    <location>
        <begin position="1"/>
        <end position="492"/>
    </location>
</feature>
<organism>
    <name type="scientific">Staphylococcus aureus (strain MRSA252)</name>
    <dbReference type="NCBI Taxonomy" id="282458"/>
    <lineage>
        <taxon>Bacteria</taxon>
        <taxon>Bacillati</taxon>
        <taxon>Bacillota</taxon>
        <taxon>Bacilli</taxon>
        <taxon>Bacillales</taxon>
        <taxon>Staphylococcaceae</taxon>
        <taxon>Staphylococcus</taxon>
    </lineage>
</organism>
<dbReference type="EC" id="6.2.1.26" evidence="1"/>
<dbReference type="EMBL" id="BX571856">
    <property type="protein sequence ID" value="CAG40867.1"/>
    <property type="molecule type" value="Genomic_DNA"/>
</dbReference>
<dbReference type="RefSeq" id="WP_000348372.1">
    <property type="nucleotide sequence ID" value="NC_002952.2"/>
</dbReference>
<dbReference type="SMR" id="Q6GFR0"/>
<dbReference type="KEGG" id="sar:SAR1877"/>
<dbReference type="HOGENOM" id="CLU_000022_59_0_9"/>
<dbReference type="UniPathway" id="UPA00079"/>
<dbReference type="UniPathway" id="UPA01057">
    <property type="reaction ID" value="UER00166"/>
</dbReference>
<dbReference type="Proteomes" id="UP000000596">
    <property type="component" value="Chromosome"/>
</dbReference>
<dbReference type="GO" id="GO:0005524">
    <property type="term" value="F:ATP binding"/>
    <property type="evidence" value="ECO:0007669"/>
    <property type="project" value="UniProtKB-KW"/>
</dbReference>
<dbReference type="GO" id="GO:0008756">
    <property type="term" value="F:o-succinylbenzoate-CoA ligase activity"/>
    <property type="evidence" value="ECO:0007669"/>
    <property type="project" value="UniProtKB-UniRule"/>
</dbReference>
<dbReference type="GO" id="GO:0009234">
    <property type="term" value="P:menaquinone biosynthetic process"/>
    <property type="evidence" value="ECO:0007669"/>
    <property type="project" value="UniProtKB-UniRule"/>
</dbReference>
<dbReference type="CDD" id="cd05912">
    <property type="entry name" value="OSB_CoA_lg"/>
    <property type="match status" value="1"/>
</dbReference>
<dbReference type="Gene3D" id="3.30.300.30">
    <property type="match status" value="1"/>
</dbReference>
<dbReference type="Gene3D" id="3.40.50.12780">
    <property type="entry name" value="N-terminal domain of ligase-like"/>
    <property type="match status" value="1"/>
</dbReference>
<dbReference type="HAMAP" id="MF_00731">
    <property type="entry name" value="MenE"/>
    <property type="match status" value="1"/>
</dbReference>
<dbReference type="InterPro" id="IPR025110">
    <property type="entry name" value="AMP-bd_C"/>
</dbReference>
<dbReference type="InterPro" id="IPR045851">
    <property type="entry name" value="AMP-bd_C_sf"/>
</dbReference>
<dbReference type="InterPro" id="IPR000873">
    <property type="entry name" value="AMP-dep_synth/lig_dom"/>
</dbReference>
<dbReference type="InterPro" id="IPR042099">
    <property type="entry name" value="ANL_N_sf"/>
</dbReference>
<dbReference type="InterPro" id="IPR050237">
    <property type="entry name" value="ATP-dep_AMP-bd_enzyme"/>
</dbReference>
<dbReference type="InterPro" id="IPR010192">
    <property type="entry name" value="MenE"/>
</dbReference>
<dbReference type="NCBIfam" id="TIGR01923">
    <property type="entry name" value="menE"/>
    <property type="match status" value="1"/>
</dbReference>
<dbReference type="PANTHER" id="PTHR43767">
    <property type="entry name" value="LONG-CHAIN-FATTY-ACID--COA LIGASE"/>
    <property type="match status" value="1"/>
</dbReference>
<dbReference type="PANTHER" id="PTHR43767:SF1">
    <property type="entry name" value="NONRIBOSOMAL PEPTIDE SYNTHASE PES1 (EUROFUNG)-RELATED"/>
    <property type="match status" value="1"/>
</dbReference>
<dbReference type="Pfam" id="PF00501">
    <property type="entry name" value="AMP-binding"/>
    <property type="match status" value="1"/>
</dbReference>
<dbReference type="Pfam" id="PF13193">
    <property type="entry name" value="AMP-binding_C"/>
    <property type="match status" value="1"/>
</dbReference>
<dbReference type="SUPFAM" id="SSF56801">
    <property type="entry name" value="Acetyl-CoA synthetase-like"/>
    <property type="match status" value="1"/>
</dbReference>
<proteinExistence type="inferred from homology"/>